<gene>
    <name evidence="1" type="primary">dapB</name>
    <name type="ordered locus">DVU_1609</name>
</gene>
<proteinExistence type="inferred from homology"/>
<accession>Q72BM6</accession>
<sequence>MSTPIIVMGAGGRMGSTICRLVQEEPQLCLAAVLERPDRASGVARDGCIAGSDPDVVFPQVPGGVIIDFTAPEASMATARAAARHGNAVVIGTTGFNEEQKAELAELARQIRLFWAPNMSVGVNVLLKVLPELVRLLGEKYDLEMVELHHNRKKDSPSGTALRLAECLAEARDWNLPDVACYHREGIIGERPQKEIGVQTIRGGDVVGVHTVYCLGPGERIEVTHQAHSRETFAQGALRAAAWLATQKPGKLYNMADIF</sequence>
<dbReference type="EC" id="1.17.1.8" evidence="1"/>
<dbReference type="EMBL" id="AE017285">
    <property type="protein sequence ID" value="AAS96087.1"/>
    <property type="molecule type" value="Genomic_DNA"/>
</dbReference>
<dbReference type="RefSeq" id="WP_010938900.1">
    <property type="nucleotide sequence ID" value="NC_002937.3"/>
</dbReference>
<dbReference type="RefSeq" id="YP_010828.1">
    <property type="nucleotide sequence ID" value="NC_002937.3"/>
</dbReference>
<dbReference type="SMR" id="Q72BM6"/>
<dbReference type="IntAct" id="Q72BM6">
    <property type="interactions" value="1"/>
</dbReference>
<dbReference type="STRING" id="882.DVU_1609"/>
<dbReference type="PaxDb" id="882-DVU_1609"/>
<dbReference type="EnsemblBacteria" id="AAS96087">
    <property type="protein sequence ID" value="AAS96087"/>
    <property type="gene ID" value="DVU_1609"/>
</dbReference>
<dbReference type="KEGG" id="dvu:DVU_1609"/>
<dbReference type="PATRIC" id="fig|882.5.peg.1484"/>
<dbReference type="eggNOG" id="COG0289">
    <property type="taxonomic scope" value="Bacteria"/>
</dbReference>
<dbReference type="HOGENOM" id="CLU_047479_2_1_7"/>
<dbReference type="OrthoDB" id="9790352at2"/>
<dbReference type="PhylomeDB" id="Q72BM6"/>
<dbReference type="UniPathway" id="UPA00034">
    <property type="reaction ID" value="UER00018"/>
</dbReference>
<dbReference type="Proteomes" id="UP000002194">
    <property type="component" value="Chromosome"/>
</dbReference>
<dbReference type="GO" id="GO:0005737">
    <property type="term" value="C:cytoplasm"/>
    <property type="evidence" value="ECO:0007669"/>
    <property type="project" value="UniProtKB-SubCell"/>
</dbReference>
<dbReference type="GO" id="GO:0008839">
    <property type="term" value="F:4-hydroxy-tetrahydrodipicolinate reductase"/>
    <property type="evidence" value="ECO:0007669"/>
    <property type="project" value="UniProtKB-EC"/>
</dbReference>
<dbReference type="GO" id="GO:0051287">
    <property type="term" value="F:NAD binding"/>
    <property type="evidence" value="ECO:0007669"/>
    <property type="project" value="UniProtKB-UniRule"/>
</dbReference>
<dbReference type="GO" id="GO:0050661">
    <property type="term" value="F:NADP binding"/>
    <property type="evidence" value="ECO:0007669"/>
    <property type="project" value="UniProtKB-UniRule"/>
</dbReference>
<dbReference type="GO" id="GO:0016726">
    <property type="term" value="F:oxidoreductase activity, acting on CH or CH2 groups, NAD or NADP as acceptor"/>
    <property type="evidence" value="ECO:0007669"/>
    <property type="project" value="UniProtKB-UniRule"/>
</dbReference>
<dbReference type="GO" id="GO:0019877">
    <property type="term" value="P:diaminopimelate biosynthetic process"/>
    <property type="evidence" value="ECO:0007669"/>
    <property type="project" value="UniProtKB-UniRule"/>
</dbReference>
<dbReference type="GO" id="GO:0009089">
    <property type="term" value="P:lysine biosynthetic process via diaminopimelate"/>
    <property type="evidence" value="ECO:0007669"/>
    <property type="project" value="UniProtKB-UniRule"/>
</dbReference>
<dbReference type="CDD" id="cd02274">
    <property type="entry name" value="DHDPR_N"/>
    <property type="match status" value="1"/>
</dbReference>
<dbReference type="FunFam" id="3.30.360.10:FF:000004">
    <property type="entry name" value="4-hydroxy-tetrahydrodipicolinate reductase"/>
    <property type="match status" value="1"/>
</dbReference>
<dbReference type="Gene3D" id="3.30.360.10">
    <property type="entry name" value="Dihydrodipicolinate Reductase, domain 2"/>
    <property type="match status" value="1"/>
</dbReference>
<dbReference type="Gene3D" id="3.40.50.720">
    <property type="entry name" value="NAD(P)-binding Rossmann-like Domain"/>
    <property type="match status" value="1"/>
</dbReference>
<dbReference type="HAMAP" id="MF_00102">
    <property type="entry name" value="DapB"/>
    <property type="match status" value="1"/>
</dbReference>
<dbReference type="InterPro" id="IPR022663">
    <property type="entry name" value="DapB_C"/>
</dbReference>
<dbReference type="InterPro" id="IPR000846">
    <property type="entry name" value="DapB_N"/>
</dbReference>
<dbReference type="InterPro" id="IPR023940">
    <property type="entry name" value="DHDPR_bac"/>
</dbReference>
<dbReference type="InterPro" id="IPR036291">
    <property type="entry name" value="NAD(P)-bd_dom_sf"/>
</dbReference>
<dbReference type="NCBIfam" id="TIGR00036">
    <property type="entry name" value="dapB"/>
    <property type="match status" value="1"/>
</dbReference>
<dbReference type="PANTHER" id="PTHR20836:SF0">
    <property type="entry name" value="4-HYDROXY-TETRAHYDRODIPICOLINATE REDUCTASE 1, CHLOROPLASTIC-RELATED"/>
    <property type="match status" value="1"/>
</dbReference>
<dbReference type="PANTHER" id="PTHR20836">
    <property type="entry name" value="DIHYDRODIPICOLINATE REDUCTASE"/>
    <property type="match status" value="1"/>
</dbReference>
<dbReference type="Pfam" id="PF05173">
    <property type="entry name" value="DapB_C"/>
    <property type="match status" value="1"/>
</dbReference>
<dbReference type="Pfam" id="PF01113">
    <property type="entry name" value="DapB_N"/>
    <property type="match status" value="1"/>
</dbReference>
<dbReference type="PIRSF" id="PIRSF000161">
    <property type="entry name" value="DHPR"/>
    <property type="match status" value="1"/>
</dbReference>
<dbReference type="SUPFAM" id="SSF55347">
    <property type="entry name" value="Glyceraldehyde-3-phosphate dehydrogenase-like, C-terminal domain"/>
    <property type="match status" value="1"/>
</dbReference>
<dbReference type="SUPFAM" id="SSF51735">
    <property type="entry name" value="NAD(P)-binding Rossmann-fold domains"/>
    <property type="match status" value="1"/>
</dbReference>
<evidence type="ECO:0000255" key="1">
    <source>
        <dbReference type="HAMAP-Rule" id="MF_00102"/>
    </source>
</evidence>
<evidence type="ECO:0000305" key="2"/>
<organism>
    <name type="scientific">Nitratidesulfovibrio vulgaris (strain ATCC 29579 / DSM 644 / CCUG 34227 / NCIMB 8303 / VKM B-1760 / Hildenborough)</name>
    <name type="common">Desulfovibrio vulgaris</name>
    <dbReference type="NCBI Taxonomy" id="882"/>
    <lineage>
        <taxon>Bacteria</taxon>
        <taxon>Pseudomonadati</taxon>
        <taxon>Thermodesulfobacteriota</taxon>
        <taxon>Desulfovibrionia</taxon>
        <taxon>Desulfovibrionales</taxon>
        <taxon>Desulfovibrionaceae</taxon>
        <taxon>Nitratidesulfovibrio</taxon>
    </lineage>
</organism>
<reference key="1">
    <citation type="journal article" date="2004" name="Nat. Biotechnol.">
        <title>The genome sequence of the anaerobic, sulfate-reducing bacterium Desulfovibrio vulgaris Hildenborough.</title>
        <authorList>
            <person name="Heidelberg J.F."/>
            <person name="Seshadri R."/>
            <person name="Haveman S.A."/>
            <person name="Hemme C.L."/>
            <person name="Paulsen I.T."/>
            <person name="Kolonay J.F."/>
            <person name="Eisen J.A."/>
            <person name="Ward N.L."/>
            <person name="Methe B.A."/>
            <person name="Brinkac L.M."/>
            <person name="Daugherty S.C."/>
            <person name="DeBoy R.T."/>
            <person name="Dodson R.J."/>
            <person name="Durkin A.S."/>
            <person name="Madupu R."/>
            <person name="Nelson W.C."/>
            <person name="Sullivan S.A."/>
            <person name="Fouts D.E."/>
            <person name="Haft D.H."/>
            <person name="Selengut J."/>
            <person name="Peterson J.D."/>
            <person name="Davidsen T.M."/>
            <person name="Zafar N."/>
            <person name="Zhou L."/>
            <person name="Radune D."/>
            <person name="Dimitrov G."/>
            <person name="Hance M."/>
            <person name="Tran K."/>
            <person name="Khouri H.M."/>
            <person name="Gill J."/>
            <person name="Utterback T.R."/>
            <person name="Feldblyum T.V."/>
            <person name="Wall J.D."/>
            <person name="Voordouw G."/>
            <person name="Fraser C.M."/>
        </authorList>
    </citation>
    <scope>NUCLEOTIDE SEQUENCE [LARGE SCALE GENOMIC DNA]</scope>
    <source>
        <strain>ATCC 29579 / DSM 644 / CCUG 34227 / NCIMB 8303 / VKM B-1760 / Hildenborough</strain>
    </source>
</reference>
<feature type="chain" id="PRO_0000228347" description="4-hydroxy-tetrahydrodipicolinate reductase">
    <location>
        <begin position="1"/>
        <end position="259"/>
    </location>
</feature>
<feature type="active site" description="Proton donor/acceptor" evidence="1">
    <location>
        <position position="149"/>
    </location>
</feature>
<feature type="active site" description="Proton donor" evidence="1">
    <location>
        <position position="153"/>
    </location>
</feature>
<feature type="binding site" evidence="1">
    <location>
        <begin position="9"/>
        <end position="14"/>
    </location>
    <ligand>
        <name>NAD(+)</name>
        <dbReference type="ChEBI" id="CHEBI:57540"/>
    </ligand>
</feature>
<feature type="binding site" evidence="1">
    <location>
        <position position="35"/>
    </location>
    <ligand>
        <name>NAD(+)</name>
        <dbReference type="ChEBI" id="CHEBI:57540"/>
    </ligand>
</feature>
<feature type="binding site" evidence="1">
    <location>
        <position position="36"/>
    </location>
    <ligand>
        <name>NADP(+)</name>
        <dbReference type="ChEBI" id="CHEBI:58349"/>
    </ligand>
</feature>
<feature type="binding site" evidence="1">
    <location>
        <begin position="92"/>
        <end position="94"/>
    </location>
    <ligand>
        <name>NAD(+)</name>
        <dbReference type="ChEBI" id="CHEBI:57540"/>
    </ligand>
</feature>
<feature type="binding site" evidence="1">
    <location>
        <begin position="116"/>
        <end position="119"/>
    </location>
    <ligand>
        <name>NAD(+)</name>
        <dbReference type="ChEBI" id="CHEBI:57540"/>
    </ligand>
</feature>
<feature type="binding site" evidence="1">
    <location>
        <position position="150"/>
    </location>
    <ligand>
        <name>(S)-2,3,4,5-tetrahydrodipicolinate</name>
        <dbReference type="ChEBI" id="CHEBI:16845"/>
    </ligand>
</feature>
<feature type="binding site" evidence="1">
    <location>
        <begin position="159"/>
        <end position="160"/>
    </location>
    <ligand>
        <name>(S)-2,3,4,5-tetrahydrodipicolinate</name>
        <dbReference type="ChEBI" id="CHEBI:16845"/>
    </ligand>
</feature>
<name>DAPB_NITV2</name>
<keyword id="KW-0028">Amino-acid biosynthesis</keyword>
<keyword id="KW-0963">Cytoplasm</keyword>
<keyword id="KW-0220">Diaminopimelate biosynthesis</keyword>
<keyword id="KW-0457">Lysine biosynthesis</keyword>
<keyword id="KW-0520">NAD</keyword>
<keyword id="KW-0521">NADP</keyword>
<keyword id="KW-0560">Oxidoreductase</keyword>
<keyword id="KW-1185">Reference proteome</keyword>
<comment type="function">
    <text evidence="1">Catalyzes the conversion of 4-hydroxy-tetrahydrodipicolinate (HTPA) to tetrahydrodipicolinate.</text>
</comment>
<comment type="catalytic activity">
    <reaction evidence="1">
        <text>(S)-2,3,4,5-tetrahydrodipicolinate + NAD(+) + H2O = (2S,4S)-4-hydroxy-2,3,4,5-tetrahydrodipicolinate + NADH + H(+)</text>
        <dbReference type="Rhea" id="RHEA:35323"/>
        <dbReference type="ChEBI" id="CHEBI:15377"/>
        <dbReference type="ChEBI" id="CHEBI:15378"/>
        <dbReference type="ChEBI" id="CHEBI:16845"/>
        <dbReference type="ChEBI" id="CHEBI:57540"/>
        <dbReference type="ChEBI" id="CHEBI:57945"/>
        <dbReference type="ChEBI" id="CHEBI:67139"/>
        <dbReference type="EC" id="1.17.1.8"/>
    </reaction>
</comment>
<comment type="catalytic activity">
    <reaction evidence="1">
        <text>(S)-2,3,4,5-tetrahydrodipicolinate + NADP(+) + H2O = (2S,4S)-4-hydroxy-2,3,4,5-tetrahydrodipicolinate + NADPH + H(+)</text>
        <dbReference type="Rhea" id="RHEA:35331"/>
        <dbReference type="ChEBI" id="CHEBI:15377"/>
        <dbReference type="ChEBI" id="CHEBI:15378"/>
        <dbReference type="ChEBI" id="CHEBI:16845"/>
        <dbReference type="ChEBI" id="CHEBI:57783"/>
        <dbReference type="ChEBI" id="CHEBI:58349"/>
        <dbReference type="ChEBI" id="CHEBI:67139"/>
        <dbReference type="EC" id="1.17.1.8"/>
    </reaction>
</comment>
<comment type="pathway">
    <text evidence="1">Amino-acid biosynthesis; L-lysine biosynthesis via DAP pathway; (S)-tetrahydrodipicolinate from L-aspartate: step 4/4.</text>
</comment>
<comment type="subcellular location">
    <subcellularLocation>
        <location evidence="1">Cytoplasm</location>
    </subcellularLocation>
</comment>
<comment type="similarity">
    <text evidence="1">Belongs to the DapB family.</text>
</comment>
<comment type="caution">
    <text evidence="2">Was originally thought to be a dihydrodipicolinate reductase (DHDPR), catalyzing the conversion of dihydrodipicolinate to tetrahydrodipicolinate. However, it was shown in E.coli that the substrate of the enzymatic reaction is not dihydrodipicolinate (DHDP) but in fact (2S,4S)-4-hydroxy-2,3,4,5-tetrahydrodipicolinic acid (HTPA), the product released by the DapA-catalyzed reaction.</text>
</comment>
<protein>
    <recommendedName>
        <fullName evidence="1">4-hydroxy-tetrahydrodipicolinate reductase</fullName>
        <shortName evidence="1">HTPA reductase</shortName>
        <ecNumber evidence="1">1.17.1.8</ecNumber>
    </recommendedName>
</protein>